<dbReference type="EC" id="2.1.1.-" evidence="1"/>
<dbReference type="EMBL" id="CP000453">
    <property type="protein sequence ID" value="ABI55962.1"/>
    <property type="molecule type" value="Genomic_DNA"/>
</dbReference>
<dbReference type="RefSeq" id="WP_011628357.1">
    <property type="nucleotide sequence ID" value="NC_008340.1"/>
</dbReference>
<dbReference type="SMR" id="Q0AB25"/>
<dbReference type="KEGG" id="aeh:Mlg_0608"/>
<dbReference type="eggNOG" id="COG2264">
    <property type="taxonomic scope" value="Bacteria"/>
</dbReference>
<dbReference type="HOGENOM" id="CLU_049382_4_1_6"/>
<dbReference type="OrthoDB" id="9785995at2"/>
<dbReference type="Proteomes" id="UP000001962">
    <property type="component" value="Chromosome"/>
</dbReference>
<dbReference type="GO" id="GO:0005829">
    <property type="term" value="C:cytosol"/>
    <property type="evidence" value="ECO:0007669"/>
    <property type="project" value="TreeGrafter"/>
</dbReference>
<dbReference type="GO" id="GO:0016279">
    <property type="term" value="F:protein-lysine N-methyltransferase activity"/>
    <property type="evidence" value="ECO:0007669"/>
    <property type="project" value="TreeGrafter"/>
</dbReference>
<dbReference type="GO" id="GO:0032259">
    <property type="term" value="P:methylation"/>
    <property type="evidence" value="ECO:0007669"/>
    <property type="project" value="UniProtKB-KW"/>
</dbReference>
<dbReference type="CDD" id="cd02440">
    <property type="entry name" value="AdoMet_MTases"/>
    <property type="match status" value="1"/>
</dbReference>
<dbReference type="Gene3D" id="3.40.50.150">
    <property type="entry name" value="Vaccinia Virus protein VP39"/>
    <property type="match status" value="1"/>
</dbReference>
<dbReference type="HAMAP" id="MF_00735">
    <property type="entry name" value="Methyltr_PrmA"/>
    <property type="match status" value="1"/>
</dbReference>
<dbReference type="InterPro" id="IPR050078">
    <property type="entry name" value="Ribosomal_L11_MeTrfase_PrmA"/>
</dbReference>
<dbReference type="InterPro" id="IPR004498">
    <property type="entry name" value="Ribosomal_PrmA_MeTrfase"/>
</dbReference>
<dbReference type="InterPro" id="IPR029063">
    <property type="entry name" value="SAM-dependent_MTases_sf"/>
</dbReference>
<dbReference type="NCBIfam" id="TIGR00406">
    <property type="entry name" value="prmA"/>
    <property type="match status" value="1"/>
</dbReference>
<dbReference type="PANTHER" id="PTHR43648">
    <property type="entry name" value="ELECTRON TRANSFER FLAVOPROTEIN BETA SUBUNIT LYSINE METHYLTRANSFERASE"/>
    <property type="match status" value="1"/>
</dbReference>
<dbReference type="PANTHER" id="PTHR43648:SF1">
    <property type="entry name" value="ELECTRON TRANSFER FLAVOPROTEIN BETA SUBUNIT LYSINE METHYLTRANSFERASE"/>
    <property type="match status" value="1"/>
</dbReference>
<dbReference type="Pfam" id="PF06325">
    <property type="entry name" value="PrmA"/>
    <property type="match status" value="1"/>
</dbReference>
<dbReference type="PIRSF" id="PIRSF000401">
    <property type="entry name" value="RPL11_MTase"/>
    <property type="match status" value="1"/>
</dbReference>
<dbReference type="SUPFAM" id="SSF53335">
    <property type="entry name" value="S-adenosyl-L-methionine-dependent methyltransferases"/>
    <property type="match status" value="1"/>
</dbReference>
<comment type="function">
    <text evidence="1">Methylates ribosomal protein L11.</text>
</comment>
<comment type="catalytic activity">
    <reaction evidence="1">
        <text>L-lysyl-[protein] + 3 S-adenosyl-L-methionine = N(6),N(6),N(6)-trimethyl-L-lysyl-[protein] + 3 S-adenosyl-L-homocysteine + 3 H(+)</text>
        <dbReference type="Rhea" id="RHEA:54192"/>
        <dbReference type="Rhea" id="RHEA-COMP:9752"/>
        <dbReference type="Rhea" id="RHEA-COMP:13826"/>
        <dbReference type="ChEBI" id="CHEBI:15378"/>
        <dbReference type="ChEBI" id="CHEBI:29969"/>
        <dbReference type="ChEBI" id="CHEBI:57856"/>
        <dbReference type="ChEBI" id="CHEBI:59789"/>
        <dbReference type="ChEBI" id="CHEBI:61961"/>
    </reaction>
</comment>
<comment type="subcellular location">
    <subcellularLocation>
        <location evidence="1">Cytoplasm</location>
    </subcellularLocation>
</comment>
<comment type="similarity">
    <text evidence="1">Belongs to the methyltransferase superfamily. PrmA family.</text>
</comment>
<gene>
    <name evidence="1" type="primary">prmA</name>
    <name type="ordered locus">Mlg_0608</name>
</gene>
<name>PRMA_ALKEH</name>
<keyword id="KW-0963">Cytoplasm</keyword>
<keyword id="KW-0489">Methyltransferase</keyword>
<keyword id="KW-1185">Reference proteome</keyword>
<keyword id="KW-0949">S-adenosyl-L-methionine</keyword>
<keyword id="KW-0808">Transferase</keyword>
<sequence>MPHTQITLDCAQSQVPRVEALLEALGALAITLSEPDDEEILEPGPGEQRLWSHLRLTALFDAATVDPLRLQARVAEVLGAPPRGWRVERLVDRAWERAWMDDFHPMRFGDRLWVVPWGQTPPAAEAVNLRLDPGLAFGTGTHPTTALCLRWLDGLPLQADTRLVDYGCGSGILAVAGCLLGAGHCTAVDNDPQARQATADNARRNGVGERIRVQGPGPLPRAGADVLVANILARVLVAMAGELSPSVRPGGRIALSGILRGQVDQVRACYSSWFEMERPEYQGDWALLAGTRRG</sequence>
<reference key="1">
    <citation type="submission" date="2006-08" db="EMBL/GenBank/DDBJ databases">
        <title>Complete sequence of Alkalilimnicola ehrilichei MLHE-1.</title>
        <authorList>
            <person name="Copeland A."/>
            <person name="Lucas S."/>
            <person name="Lapidus A."/>
            <person name="Barry K."/>
            <person name="Detter J.C."/>
            <person name="Glavina del Rio T."/>
            <person name="Hammon N."/>
            <person name="Israni S."/>
            <person name="Dalin E."/>
            <person name="Tice H."/>
            <person name="Pitluck S."/>
            <person name="Sims D."/>
            <person name="Brettin T."/>
            <person name="Bruce D."/>
            <person name="Han C."/>
            <person name="Tapia R."/>
            <person name="Gilna P."/>
            <person name="Schmutz J."/>
            <person name="Larimer F."/>
            <person name="Land M."/>
            <person name="Hauser L."/>
            <person name="Kyrpides N."/>
            <person name="Mikhailova N."/>
            <person name="Oremland R.S."/>
            <person name="Hoeft S.E."/>
            <person name="Switzer-Blum J."/>
            <person name="Kulp T."/>
            <person name="King G."/>
            <person name="Tabita R."/>
            <person name="Witte B."/>
            <person name="Santini J.M."/>
            <person name="Basu P."/>
            <person name="Hollibaugh J.T."/>
            <person name="Xie G."/>
            <person name="Stolz J.F."/>
            <person name="Richardson P."/>
        </authorList>
    </citation>
    <scope>NUCLEOTIDE SEQUENCE [LARGE SCALE GENOMIC DNA]</scope>
    <source>
        <strain>ATCC BAA-1101 / DSM 17681 / MLHE-1</strain>
    </source>
</reference>
<proteinExistence type="inferred from homology"/>
<protein>
    <recommendedName>
        <fullName evidence="1">Ribosomal protein L11 methyltransferase</fullName>
        <shortName evidence="1">L11 Mtase</shortName>
        <ecNumber evidence="1">2.1.1.-</ecNumber>
    </recommendedName>
</protein>
<feature type="chain" id="PRO_1000192573" description="Ribosomal protein L11 methyltransferase">
    <location>
        <begin position="1"/>
        <end position="294"/>
    </location>
</feature>
<feature type="binding site" evidence="1">
    <location>
        <position position="145"/>
    </location>
    <ligand>
        <name>S-adenosyl-L-methionine</name>
        <dbReference type="ChEBI" id="CHEBI:59789"/>
    </ligand>
</feature>
<feature type="binding site" evidence="1">
    <location>
        <position position="167"/>
    </location>
    <ligand>
        <name>S-adenosyl-L-methionine</name>
        <dbReference type="ChEBI" id="CHEBI:59789"/>
    </ligand>
</feature>
<feature type="binding site" evidence="1">
    <location>
        <position position="189"/>
    </location>
    <ligand>
        <name>S-adenosyl-L-methionine</name>
        <dbReference type="ChEBI" id="CHEBI:59789"/>
    </ligand>
</feature>
<feature type="binding site" evidence="1">
    <location>
        <position position="230"/>
    </location>
    <ligand>
        <name>S-adenosyl-L-methionine</name>
        <dbReference type="ChEBI" id="CHEBI:59789"/>
    </ligand>
</feature>
<evidence type="ECO:0000255" key="1">
    <source>
        <dbReference type="HAMAP-Rule" id="MF_00735"/>
    </source>
</evidence>
<accession>Q0AB25</accession>
<organism>
    <name type="scientific">Alkalilimnicola ehrlichii (strain ATCC BAA-1101 / DSM 17681 / MLHE-1)</name>
    <dbReference type="NCBI Taxonomy" id="187272"/>
    <lineage>
        <taxon>Bacteria</taxon>
        <taxon>Pseudomonadati</taxon>
        <taxon>Pseudomonadota</taxon>
        <taxon>Gammaproteobacteria</taxon>
        <taxon>Chromatiales</taxon>
        <taxon>Ectothiorhodospiraceae</taxon>
        <taxon>Alkalilimnicola</taxon>
    </lineage>
</organism>